<organism>
    <name type="scientific">Prochlorococcus marinus (strain MIT 9313)</name>
    <dbReference type="NCBI Taxonomy" id="74547"/>
    <lineage>
        <taxon>Bacteria</taxon>
        <taxon>Bacillati</taxon>
        <taxon>Cyanobacteriota</taxon>
        <taxon>Cyanophyceae</taxon>
        <taxon>Synechococcales</taxon>
        <taxon>Prochlorococcaceae</taxon>
        <taxon>Prochlorococcus</taxon>
    </lineage>
</organism>
<sequence length="64" mass="7429">MAKNKGVRIVITLECNECRSNPAKRSPGVSRYTTEKNRRNTTERLEIKKFCPHCNKSTPHKEIK</sequence>
<gene>
    <name evidence="1" type="primary">rpmG</name>
    <name evidence="1" type="synonym">rpl33</name>
    <name type="ordered locus">PMT_0739</name>
</gene>
<proteinExistence type="inferred from homology"/>
<dbReference type="EMBL" id="BX548175">
    <property type="protein sequence ID" value="CAE20914.1"/>
    <property type="molecule type" value="Genomic_DNA"/>
</dbReference>
<dbReference type="RefSeq" id="WP_011130117.1">
    <property type="nucleotide sequence ID" value="NC_005071.1"/>
</dbReference>
<dbReference type="SMR" id="Q7V7K4"/>
<dbReference type="KEGG" id="pmt:PMT_0739"/>
<dbReference type="eggNOG" id="COG0267">
    <property type="taxonomic scope" value="Bacteria"/>
</dbReference>
<dbReference type="HOGENOM" id="CLU_190949_3_0_3"/>
<dbReference type="OrthoDB" id="9801333at2"/>
<dbReference type="Proteomes" id="UP000001423">
    <property type="component" value="Chromosome"/>
</dbReference>
<dbReference type="GO" id="GO:0005737">
    <property type="term" value="C:cytoplasm"/>
    <property type="evidence" value="ECO:0007669"/>
    <property type="project" value="UniProtKB-ARBA"/>
</dbReference>
<dbReference type="GO" id="GO:1990904">
    <property type="term" value="C:ribonucleoprotein complex"/>
    <property type="evidence" value="ECO:0007669"/>
    <property type="project" value="UniProtKB-KW"/>
</dbReference>
<dbReference type="GO" id="GO:0005840">
    <property type="term" value="C:ribosome"/>
    <property type="evidence" value="ECO:0007669"/>
    <property type="project" value="UniProtKB-KW"/>
</dbReference>
<dbReference type="GO" id="GO:0003735">
    <property type="term" value="F:structural constituent of ribosome"/>
    <property type="evidence" value="ECO:0007669"/>
    <property type="project" value="InterPro"/>
</dbReference>
<dbReference type="GO" id="GO:0006412">
    <property type="term" value="P:translation"/>
    <property type="evidence" value="ECO:0007669"/>
    <property type="project" value="UniProtKB-UniRule"/>
</dbReference>
<dbReference type="Gene3D" id="2.20.28.120">
    <property type="entry name" value="Ribosomal protein L33"/>
    <property type="match status" value="1"/>
</dbReference>
<dbReference type="HAMAP" id="MF_00294">
    <property type="entry name" value="Ribosomal_bL33"/>
    <property type="match status" value="1"/>
</dbReference>
<dbReference type="InterPro" id="IPR001705">
    <property type="entry name" value="Ribosomal_bL33"/>
</dbReference>
<dbReference type="InterPro" id="IPR018264">
    <property type="entry name" value="Ribosomal_bL33_CS"/>
</dbReference>
<dbReference type="InterPro" id="IPR038584">
    <property type="entry name" value="Ribosomal_bL33_sf"/>
</dbReference>
<dbReference type="InterPro" id="IPR011332">
    <property type="entry name" value="Ribosomal_zn-bd"/>
</dbReference>
<dbReference type="NCBIfam" id="NF001764">
    <property type="entry name" value="PRK00504.1"/>
    <property type="match status" value="1"/>
</dbReference>
<dbReference type="NCBIfam" id="NF001860">
    <property type="entry name" value="PRK00595.1"/>
    <property type="match status" value="1"/>
</dbReference>
<dbReference type="NCBIfam" id="TIGR01023">
    <property type="entry name" value="rpmG_bact"/>
    <property type="match status" value="1"/>
</dbReference>
<dbReference type="PANTHER" id="PTHR43168">
    <property type="entry name" value="50S RIBOSOMAL PROTEIN L33, CHLOROPLASTIC"/>
    <property type="match status" value="1"/>
</dbReference>
<dbReference type="PANTHER" id="PTHR43168:SF2">
    <property type="entry name" value="LARGE RIBOSOMAL SUBUNIT PROTEIN BL33C"/>
    <property type="match status" value="1"/>
</dbReference>
<dbReference type="Pfam" id="PF00471">
    <property type="entry name" value="Ribosomal_L33"/>
    <property type="match status" value="1"/>
</dbReference>
<dbReference type="SUPFAM" id="SSF57829">
    <property type="entry name" value="Zn-binding ribosomal proteins"/>
    <property type="match status" value="1"/>
</dbReference>
<dbReference type="PROSITE" id="PS00582">
    <property type="entry name" value="RIBOSOMAL_L33"/>
    <property type="match status" value="1"/>
</dbReference>
<evidence type="ECO:0000255" key="1">
    <source>
        <dbReference type="HAMAP-Rule" id="MF_00294"/>
    </source>
</evidence>
<evidence type="ECO:0000305" key="2"/>
<keyword id="KW-1185">Reference proteome</keyword>
<keyword id="KW-0687">Ribonucleoprotein</keyword>
<keyword id="KW-0689">Ribosomal protein</keyword>
<reference key="1">
    <citation type="journal article" date="2003" name="Nature">
        <title>Genome divergence in two Prochlorococcus ecotypes reflects oceanic niche differentiation.</title>
        <authorList>
            <person name="Rocap G."/>
            <person name="Larimer F.W."/>
            <person name="Lamerdin J.E."/>
            <person name="Malfatti S."/>
            <person name="Chain P."/>
            <person name="Ahlgren N.A."/>
            <person name="Arellano A."/>
            <person name="Coleman M."/>
            <person name="Hauser L."/>
            <person name="Hess W.R."/>
            <person name="Johnson Z.I."/>
            <person name="Land M.L."/>
            <person name="Lindell D."/>
            <person name="Post A.F."/>
            <person name="Regala W."/>
            <person name="Shah M."/>
            <person name="Shaw S.L."/>
            <person name="Steglich C."/>
            <person name="Sullivan M.B."/>
            <person name="Ting C.S."/>
            <person name="Tolonen A."/>
            <person name="Webb E.A."/>
            <person name="Zinser E.R."/>
            <person name="Chisholm S.W."/>
        </authorList>
    </citation>
    <scope>NUCLEOTIDE SEQUENCE [LARGE SCALE GENOMIC DNA]</scope>
    <source>
        <strain>MIT 9313</strain>
    </source>
</reference>
<name>RL33_PROMM</name>
<accession>Q7V7K4</accession>
<comment type="similarity">
    <text evidence="1">Belongs to the bacterial ribosomal protein bL33 family.</text>
</comment>
<feature type="chain" id="PRO_1000004180" description="Large ribosomal subunit protein bL33">
    <location>
        <begin position="1"/>
        <end position="64"/>
    </location>
</feature>
<protein>
    <recommendedName>
        <fullName evidence="1">Large ribosomal subunit protein bL33</fullName>
    </recommendedName>
    <alternativeName>
        <fullName evidence="2">50S ribosomal protein L33</fullName>
    </alternativeName>
</protein>